<sequence length="182" mass="21030">MPLDVALKRKYYEEVRPELIRRFGYQNVWEVPRLEKVVINQGLGEAKEDARILEKAAQELALITGQKPAVTRAKKSISNFKLRKGMPIGLRVTLRRDRMWIFLEKLLNVALPRIRDFRGLNPNSFDGRGNYNLGLREQLIFPEITYDMVDALRGMDIAVVTTAETDEEARALLELLGFPFRK</sequence>
<keyword id="KW-0002">3D-structure</keyword>
<keyword id="KW-0903">Direct protein sequencing</keyword>
<keyword id="KW-1185">Reference proteome</keyword>
<keyword id="KW-0687">Ribonucleoprotein</keyword>
<keyword id="KW-0689">Ribosomal protein</keyword>
<keyword id="KW-0694">RNA-binding</keyword>
<keyword id="KW-0699">rRNA-binding</keyword>
<keyword id="KW-0820">tRNA-binding</keyword>
<name>RL5_THET8</name>
<feature type="initiator methionine" description="Removed" evidence="1 2 3 4">
    <location>
        <position position="1"/>
    </location>
</feature>
<feature type="chain" id="PRO_0000125014" description="Large ribosomal subunit protein uL5">
    <location>
        <begin position="2"/>
        <end position="182"/>
    </location>
</feature>
<feature type="helix" evidence="7">
    <location>
        <begin position="6"/>
        <end position="12"/>
    </location>
</feature>
<feature type="helix" evidence="7">
    <location>
        <begin position="15"/>
        <end position="23"/>
    </location>
</feature>
<feature type="turn" evidence="7">
    <location>
        <begin position="28"/>
        <end position="30"/>
    </location>
</feature>
<feature type="strand" evidence="7">
    <location>
        <begin position="34"/>
        <end position="40"/>
    </location>
</feature>
<feature type="turn" evidence="7">
    <location>
        <begin position="48"/>
        <end position="50"/>
    </location>
</feature>
<feature type="helix" evidence="7">
    <location>
        <begin position="55"/>
        <end position="64"/>
    </location>
</feature>
<feature type="strand" evidence="7">
    <location>
        <begin position="84"/>
        <end position="86"/>
    </location>
</feature>
<feature type="strand" evidence="7">
    <location>
        <begin position="90"/>
        <end position="94"/>
    </location>
</feature>
<feature type="helix" evidence="7">
    <location>
        <begin position="98"/>
        <end position="113"/>
    </location>
</feature>
<feature type="strand" evidence="7">
    <location>
        <begin position="114"/>
        <end position="116"/>
    </location>
</feature>
<feature type="strand" evidence="7">
    <location>
        <begin position="124"/>
        <end position="136"/>
    </location>
</feature>
<feature type="strand" evidence="7">
    <location>
        <begin position="138"/>
        <end position="144"/>
    </location>
</feature>
<feature type="turn" evidence="7">
    <location>
        <begin position="146"/>
        <end position="148"/>
    </location>
</feature>
<feature type="strand" evidence="7">
    <location>
        <begin position="155"/>
        <end position="162"/>
    </location>
</feature>
<feature type="helix" evidence="7">
    <location>
        <begin position="166"/>
        <end position="175"/>
    </location>
</feature>
<proteinExistence type="evidence at protein level"/>
<accession>Q5SHQ0</accession>
<comment type="function">
    <text>This is one of the proteins that bind and probably mediate the attachment of the 5S RNA into the large ribosomal subunit, where it forms part of the central protuberance. In the 70S ribosome it contacts protein S13 of the 30S subunit (forming bridge B1b) connecting the head of the 30S subunit to the top of the 50S subunit. The bridge itself contacts the P site tRNA and is implicated in movement during ribosome translocation. Also contacts the P site tRNA independently of the intersubunit bridge; the 5S rRNA and some of its associated proteins might help stabilize positioning of ribosome-bound tRNAs.</text>
</comment>
<comment type="subunit">
    <text evidence="3">Part of the 50S ribosomal subunit; part of the 5S rRNA/uL5/uL18/bL25 (TL7) subcomplex; has also been isolated as a complex with 5S rRNA, bL25 (TL7) and DNA binding protein II. Forms a bridge to the 30S subunit in the 70S ribosome, contacting protein uS13; this bridge is straddled by the 5S rRNA. Contacts the P site tRNA.</text>
</comment>
<comment type="mass spectrometry" mass="20900.0" method="MALDI" evidence="2"/>
<comment type="similarity">
    <text evidence="6">Belongs to the universal ribosomal protein uL5 family.</text>
</comment>
<comment type="caution">
    <text evidence="6">In PubMed:11154066 there is uncertainty about the number of Arg residues at position 10 and whether position 25 is Pro or Tyr.</text>
</comment>
<protein>
    <recommendedName>
        <fullName evidence="6">Large ribosomal subunit protein uL5</fullName>
    </recommendedName>
    <alternativeName>
        <fullName>50S ribosomal protein L5</fullName>
        <shortName evidence="5">TthL5</shortName>
    </alternativeName>
</protein>
<organism>
    <name type="scientific">Thermus thermophilus (strain ATCC 27634 / DSM 579 / HB8)</name>
    <dbReference type="NCBI Taxonomy" id="300852"/>
    <lineage>
        <taxon>Bacteria</taxon>
        <taxon>Thermotogati</taxon>
        <taxon>Deinococcota</taxon>
        <taxon>Deinococci</taxon>
        <taxon>Thermales</taxon>
        <taxon>Thermaceae</taxon>
        <taxon>Thermus</taxon>
    </lineage>
</organism>
<dbReference type="EMBL" id="AP008226">
    <property type="protein sequence ID" value="BAD71503.1"/>
    <property type="molecule type" value="Genomic_DNA"/>
</dbReference>
<dbReference type="RefSeq" id="WP_011228843.1">
    <property type="nucleotide sequence ID" value="NC_006461.1"/>
</dbReference>
<dbReference type="RefSeq" id="YP_144946.1">
    <property type="nucleotide sequence ID" value="NC_006461.1"/>
</dbReference>
<dbReference type="PDB" id="1VVJ">
    <property type="method" value="X-ray"/>
    <property type="resolution" value="3.44 A"/>
    <property type="chains" value="RG/YG=1-182"/>
</dbReference>
<dbReference type="PDB" id="1VY4">
    <property type="method" value="X-ray"/>
    <property type="resolution" value="2.60 A"/>
    <property type="chains" value="BG/DG=1-182"/>
</dbReference>
<dbReference type="PDB" id="1VY5">
    <property type="method" value="X-ray"/>
    <property type="resolution" value="2.55 A"/>
    <property type="chains" value="BG/DG=1-182"/>
</dbReference>
<dbReference type="PDB" id="1VY6">
    <property type="method" value="X-ray"/>
    <property type="resolution" value="2.90 A"/>
    <property type="chains" value="BG/DG=1-182"/>
</dbReference>
<dbReference type="PDB" id="1VY7">
    <property type="method" value="X-ray"/>
    <property type="resolution" value="2.80 A"/>
    <property type="chains" value="BG/DG=1-182"/>
</dbReference>
<dbReference type="PDB" id="4L47">
    <property type="method" value="X-ray"/>
    <property type="resolution" value="3.22 A"/>
    <property type="chains" value="RG/YG=1-182"/>
</dbReference>
<dbReference type="PDB" id="4L71">
    <property type="method" value="X-ray"/>
    <property type="resolution" value="3.90 A"/>
    <property type="chains" value="RG/YG=1-182"/>
</dbReference>
<dbReference type="PDB" id="4LEL">
    <property type="method" value="X-ray"/>
    <property type="resolution" value="3.90 A"/>
    <property type="chains" value="RG/YG=1-182"/>
</dbReference>
<dbReference type="PDB" id="4LFZ">
    <property type="method" value="X-ray"/>
    <property type="resolution" value="3.92 A"/>
    <property type="chains" value="RG/YG=1-182"/>
</dbReference>
<dbReference type="PDB" id="4LNT">
    <property type="method" value="X-ray"/>
    <property type="resolution" value="2.94 A"/>
    <property type="chains" value="RG/YG=1-182"/>
</dbReference>
<dbReference type="PDB" id="4LSK">
    <property type="method" value="X-ray"/>
    <property type="resolution" value="3.48 A"/>
    <property type="chains" value="RG/YG=1-182"/>
</dbReference>
<dbReference type="PDB" id="4LT8">
    <property type="method" value="X-ray"/>
    <property type="resolution" value="3.14 A"/>
    <property type="chains" value="RG/YG=1-182"/>
</dbReference>
<dbReference type="PDB" id="4P6F">
    <property type="method" value="X-ray"/>
    <property type="resolution" value="3.60 A"/>
    <property type="chains" value="RG/YG=1-182"/>
</dbReference>
<dbReference type="PDB" id="4P70">
    <property type="method" value="X-ray"/>
    <property type="resolution" value="3.68 A"/>
    <property type="chains" value="RG/YG=1-182"/>
</dbReference>
<dbReference type="PDB" id="4TUA">
    <property type="method" value="X-ray"/>
    <property type="resolution" value="3.60 A"/>
    <property type="chains" value="RG/YG=1-182"/>
</dbReference>
<dbReference type="PDB" id="4TUB">
    <property type="method" value="X-ray"/>
    <property type="resolution" value="3.60 A"/>
    <property type="chains" value="RG/YG=1-182"/>
</dbReference>
<dbReference type="PDB" id="4TUC">
    <property type="method" value="X-ray"/>
    <property type="resolution" value="3.60 A"/>
    <property type="chains" value="RG/YG=1-182"/>
</dbReference>
<dbReference type="PDB" id="4TUD">
    <property type="method" value="X-ray"/>
    <property type="resolution" value="3.60 A"/>
    <property type="chains" value="RG/YG=1-182"/>
</dbReference>
<dbReference type="PDB" id="4TUE">
    <property type="method" value="X-ray"/>
    <property type="resolution" value="3.50 A"/>
    <property type="chains" value="RG/YG=1-182"/>
</dbReference>
<dbReference type="PDB" id="4V42">
    <property type="method" value="X-ray"/>
    <property type="resolution" value="5.50 A"/>
    <property type="chains" value="RG=1-182"/>
</dbReference>
<dbReference type="PDB" id="4V4P">
    <property type="method" value="X-ray"/>
    <property type="resolution" value="5.50 A"/>
    <property type="chains" value="G=32-38"/>
</dbReference>
<dbReference type="PDB" id="4V4X">
    <property type="method" value="X-ray"/>
    <property type="resolution" value="5.00 A"/>
    <property type="chains" value="G=1-182"/>
</dbReference>
<dbReference type="PDB" id="4V4Y">
    <property type="method" value="X-ray"/>
    <property type="resolution" value="5.50 A"/>
    <property type="chains" value="G=1-182"/>
</dbReference>
<dbReference type="PDB" id="4V4Z">
    <property type="method" value="X-ray"/>
    <property type="resolution" value="4.51 A"/>
    <property type="chains" value="G=1-182"/>
</dbReference>
<dbReference type="PDB" id="4V51">
    <property type="method" value="X-ray"/>
    <property type="resolution" value="2.80 A"/>
    <property type="chains" value="BG/DG=2-182"/>
</dbReference>
<dbReference type="PDB" id="4V5A">
    <property type="method" value="X-ray"/>
    <property type="resolution" value="3.50 A"/>
    <property type="chains" value="BG/DG=2-182"/>
</dbReference>
<dbReference type="PDB" id="4V5C">
    <property type="method" value="X-ray"/>
    <property type="resolution" value="3.30 A"/>
    <property type="chains" value="BG/DG=1-182"/>
</dbReference>
<dbReference type="PDB" id="4V5D">
    <property type="method" value="X-ray"/>
    <property type="resolution" value="3.50 A"/>
    <property type="chains" value="BG/DG=1-182"/>
</dbReference>
<dbReference type="PDB" id="4V5E">
    <property type="method" value="X-ray"/>
    <property type="resolution" value="3.45 A"/>
    <property type="chains" value="BG/DG=1-182"/>
</dbReference>
<dbReference type="PDB" id="4V5F">
    <property type="method" value="X-ray"/>
    <property type="resolution" value="3.60 A"/>
    <property type="chains" value="BG/DG=1-182"/>
</dbReference>
<dbReference type="PDB" id="4V5G">
    <property type="method" value="X-ray"/>
    <property type="resolution" value="3.60 A"/>
    <property type="chains" value="BG/DG=1-182"/>
</dbReference>
<dbReference type="PDB" id="4V5J">
    <property type="method" value="X-ray"/>
    <property type="resolution" value="3.10 A"/>
    <property type="chains" value="BG/DG=1-182"/>
</dbReference>
<dbReference type="PDB" id="4V5K">
    <property type="method" value="X-ray"/>
    <property type="resolution" value="3.20 A"/>
    <property type="chains" value="BG/DG=1-182"/>
</dbReference>
<dbReference type="PDB" id="4V5L">
    <property type="method" value="X-ray"/>
    <property type="resolution" value="3.10 A"/>
    <property type="chains" value="BG=1-182"/>
</dbReference>
<dbReference type="PDB" id="4V5M">
    <property type="method" value="EM"/>
    <property type="resolution" value="7.80 A"/>
    <property type="chains" value="BG=1-182"/>
</dbReference>
<dbReference type="PDB" id="4V5N">
    <property type="method" value="EM"/>
    <property type="resolution" value="7.60 A"/>
    <property type="chains" value="BG=1-182"/>
</dbReference>
<dbReference type="PDB" id="4V5P">
    <property type="method" value="X-ray"/>
    <property type="resolution" value="3.10 A"/>
    <property type="chains" value="BG/DG=1-182"/>
</dbReference>
<dbReference type="PDB" id="4V5Q">
    <property type="method" value="X-ray"/>
    <property type="resolution" value="3.10 A"/>
    <property type="chains" value="BG/DG=1-182"/>
</dbReference>
<dbReference type="PDB" id="4V5R">
    <property type="method" value="X-ray"/>
    <property type="resolution" value="3.10 A"/>
    <property type="chains" value="BG/DG=1-182"/>
</dbReference>
<dbReference type="PDB" id="4V5S">
    <property type="method" value="X-ray"/>
    <property type="resolution" value="3.10 A"/>
    <property type="chains" value="BG/DG=1-182"/>
</dbReference>
<dbReference type="PDB" id="4V68">
    <property type="method" value="EM"/>
    <property type="resolution" value="6.40 A"/>
    <property type="chains" value="BG=2-182"/>
</dbReference>
<dbReference type="PDB" id="4V6A">
    <property type="method" value="X-ray"/>
    <property type="resolution" value="3.10 A"/>
    <property type="chains" value="BG/DG=1-182"/>
</dbReference>
<dbReference type="PDB" id="4V6F">
    <property type="method" value="X-ray"/>
    <property type="resolution" value="3.10 A"/>
    <property type="chains" value="AG/DG=1-182"/>
</dbReference>
<dbReference type="PDB" id="4V6G">
    <property type="method" value="X-ray"/>
    <property type="resolution" value="3.50 A"/>
    <property type="chains" value="BG/DG=1-182"/>
</dbReference>
<dbReference type="PDB" id="4V7J">
    <property type="method" value="X-ray"/>
    <property type="resolution" value="3.30 A"/>
    <property type="chains" value="AG/BG=1-182"/>
</dbReference>
<dbReference type="PDB" id="4V7K">
    <property type="method" value="X-ray"/>
    <property type="resolution" value="3.60 A"/>
    <property type="chains" value="AG/BG=1-182"/>
</dbReference>
<dbReference type="PDB" id="4V7L">
    <property type="method" value="X-ray"/>
    <property type="resolution" value="3.00 A"/>
    <property type="chains" value="BG/DG=1-182"/>
</dbReference>
<dbReference type="PDB" id="4V7M">
    <property type="method" value="X-ray"/>
    <property type="resolution" value="3.45 A"/>
    <property type="chains" value="BG/DG=1-182"/>
</dbReference>
<dbReference type="PDB" id="4V7W">
    <property type="method" value="X-ray"/>
    <property type="resolution" value="3.00 A"/>
    <property type="chains" value="BG/DG=1-182"/>
</dbReference>
<dbReference type="PDB" id="4V7X">
    <property type="method" value="X-ray"/>
    <property type="resolution" value="3.00 A"/>
    <property type="chains" value="BG/DG=1-182"/>
</dbReference>
<dbReference type="PDB" id="4V7Y">
    <property type="method" value="X-ray"/>
    <property type="resolution" value="3.00 A"/>
    <property type="chains" value="BG/DG=1-182"/>
</dbReference>
<dbReference type="PDB" id="4V7Z">
    <property type="method" value="X-ray"/>
    <property type="resolution" value="3.10 A"/>
    <property type="chains" value="BG/DG=1-182"/>
</dbReference>
<dbReference type="PDB" id="4V87">
    <property type="method" value="X-ray"/>
    <property type="resolution" value="3.10 A"/>
    <property type="chains" value="AG/DG=2-182"/>
</dbReference>
<dbReference type="PDB" id="4V8A">
    <property type="method" value="X-ray"/>
    <property type="resolution" value="3.20 A"/>
    <property type="chains" value="AG/BG=1-182"/>
</dbReference>
<dbReference type="PDB" id="4V8B">
    <property type="method" value="X-ray"/>
    <property type="resolution" value="3.00 A"/>
    <property type="chains" value="BG/DG=1-182"/>
</dbReference>
<dbReference type="PDB" id="4V8C">
    <property type="method" value="X-ray"/>
    <property type="resolution" value="3.30 A"/>
    <property type="chains" value="AG/BG=1-182"/>
</dbReference>
<dbReference type="PDB" id="4V8D">
    <property type="method" value="X-ray"/>
    <property type="resolution" value="3.00 A"/>
    <property type="chains" value="BG/DG=1-182"/>
</dbReference>
<dbReference type="PDB" id="4V8E">
    <property type="method" value="X-ray"/>
    <property type="resolution" value="3.30 A"/>
    <property type="chains" value="AG/CG=1-182"/>
</dbReference>
<dbReference type="PDB" id="4V8F">
    <property type="method" value="X-ray"/>
    <property type="resolution" value="3.30 A"/>
    <property type="chains" value="AG/DG=1-182"/>
</dbReference>
<dbReference type="PDB" id="4V8G">
    <property type="method" value="X-ray"/>
    <property type="resolution" value="3.00 A"/>
    <property type="chains" value="BG/DG=1-182"/>
</dbReference>
<dbReference type="PDB" id="4V8H">
    <property type="method" value="X-ray"/>
    <property type="resolution" value="3.10 A"/>
    <property type="chains" value="BG/DG=1-182"/>
</dbReference>
<dbReference type="PDB" id="4V8I">
    <property type="method" value="X-ray"/>
    <property type="resolution" value="2.70 A"/>
    <property type="chains" value="BG/DG=1-182"/>
</dbReference>
<dbReference type="PDB" id="4V8J">
    <property type="method" value="X-ray"/>
    <property type="resolution" value="3.90 A"/>
    <property type="chains" value="BG/DG=1-182"/>
</dbReference>
<dbReference type="PDB" id="4V8N">
    <property type="method" value="X-ray"/>
    <property type="resolution" value="3.10 A"/>
    <property type="chains" value="BG/DG=1-182"/>
</dbReference>
<dbReference type="PDB" id="4V8O">
    <property type="method" value="X-ray"/>
    <property type="resolution" value="3.80 A"/>
    <property type="chains" value="BG=1-182"/>
</dbReference>
<dbReference type="PDB" id="4V8Q">
    <property type="method" value="X-ray"/>
    <property type="resolution" value="3.10 A"/>
    <property type="chains" value="AG=1-182"/>
</dbReference>
<dbReference type="PDB" id="4V8U">
    <property type="method" value="X-ray"/>
    <property type="resolution" value="3.70 A"/>
    <property type="chains" value="BG/DG=1-182"/>
</dbReference>
<dbReference type="PDB" id="4V8X">
    <property type="method" value="X-ray"/>
    <property type="resolution" value="3.35 A"/>
    <property type="chains" value="BG/DG=1-182"/>
</dbReference>
<dbReference type="PDB" id="4V90">
    <property type="method" value="X-ray"/>
    <property type="resolution" value="2.95 A"/>
    <property type="chains" value="BG=2-182"/>
</dbReference>
<dbReference type="PDB" id="4V95">
    <property type="method" value="X-ray"/>
    <property type="resolution" value="3.20 A"/>
    <property type="chains" value="BG/DG=1-182"/>
</dbReference>
<dbReference type="PDB" id="4V97">
    <property type="method" value="X-ray"/>
    <property type="resolution" value="3.52 A"/>
    <property type="chains" value="BG/DG=1-182"/>
</dbReference>
<dbReference type="PDB" id="4V9A">
    <property type="method" value="X-ray"/>
    <property type="resolution" value="3.30 A"/>
    <property type="chains" value="BG/DG=1-182"/>
</dbReference>
<dbReference type="PDB" id="4V9B">
    <property type="method" value="X-ray"/>
    <property type="resolution" value="3.10 A"/>
    <property type="chains" value="BG/DG=1-182"/>
</dbReference>
<dbReference type="PDB" id="4V9H">
    <property type="method" value="X-ray"/>
    <property type="resolution" value="2.86 A"/>
    <property type="chains" value="BG=1-182"/>
</dbReference>
<dbReference type="PDB" id="4V9I">
    <property type="method" value="X-ray"/>
    <property type="resolution" value="3.30 A"/>
    <property type="chains" value="BG/DG=2-182"/>
</dbReference>
<dbReference type="PDB" id="4V9R">
    <property type="method" value="X-ray"/>
    <property type="resolution" value="3.00 A"/>
    <property type="chains" value="BG/DG=1-182"/>
</dbReference>
<dbReference type="PDB" id="4V9S">
    <property type="method" value="X-ray"/>
    <property type="resolution" value="3.10 A"/>
    <property type="chains" value="BG/DG=1-182"/>
</dbReference>
<dbReference type="PDB" id="4W2E">
    <property type="method" value="X-ray"/>
    <property type="resolution" value="2.90 A"/>
    <property type="chains" value="G=1-182"/>
</dbReference>
<dbReference type="PDB" id="4W2F">
    <property type="method" value="X-ray"/>
    <property type="resolution" value="2.40 A"/>
    <property type="chains" value="BG/DG=1-182"/>
</dbReference>
<dbReference type="PDB" id="4W2G">
    <property type="method" value="X-ray"/>
    <property type="resolution" value="2.55 A"/>
    <property type="chains" value="BG/DG=1-182"/>
</dbReference>
<dbReference type="PDB" id="4W2H">
    <property type="method" value="X-ray"/>
    <property type="resolution" value="2.70 A"/>
    <property type="chains" value="BG/DG=1-182"/>
</dbReference>
<dbReference type="PDB" id="4W2I">
    <property type="method" value="X-ray"/>
    <property type="resolution" value="2.70 A"/>
    <property type="chains" value="BG/DG=1-182"/>
</dbReference>
<dbReference type="PDB" id="4W4G">
    <property type="method" value="X-ray"/>
    <property type="resolution" value="3.30 A"/>
    <property type="chains" value="RG/YG=1-182"/>
</dbReference>
<dbReference type="PDB" id="4WPO">
    <property type="method" value="X-ray"/>
    <property type="resolution" value="2.80 A"/>
    <property type="chains" value="AG/CG=1-182"/>
</dbReference>
<dbReference type="PDB" id="4WQ1">
    <property type="method" value="X-ray"/>
    <property type="resolution" value="3.10 A"/>
    <property type="chains" value="41/49=2-182"/>
</dbReference>
<dbReference type="PDB" id="4WQF">
    <property type="method" value="X-ray"/>
    <property type="resolution" value="2.80 A"/>
    <property type="chains" value="AG/CG=1-182"/>
</dbReference>
<dbReference type="PDB" id="4WQR">
    <property type="method" value="X-ray"/>
    <property type="resolution" value="3.15 A"/>
    <property type="chains" value="41/49=1-182"/>
</dbReference>
<dbReference type="PDB" id="4WQU">
    <property type="method" value="X-ray"/>
    <property type="resolution" value="2.80 A"/>
    <property type="chains" value="AG/CG=1-182"/>
</dbReference>
<dbReference type="PDB" id="4WQY">
    <property type="method" value="X-ray"/>
    <property type="resolution" value="2.80 A"/>
    <property type="chains" value="AG/CG=1-182"/>
</dbReference>
<dbReference type="PDB" id="4WR6">
    <property type="method" value="X-ray"/>
    <property type="resolution" value="3.05 A"/>
    <property type="chains" value="41/49=1-182"/>
</dbReference>
<dbReference type="PDB" id="4WRA">
    <property type="method" value="X-ray"/>
    <property type="resolution" value="3.05 A"/>
    <property type="chains" value="41/49=1-182"/>
</dbReference>
<dbReference type="PDB" id="4WRO">
    <property type="method" value="X-ray"/>
    <property type="resolution" value="3.05 A"/>
    <property type="chains" value="41=1-182"/>
</dbReference>
<dbReference type="PDB" id="4WSD">
    <property type="method" value="X-ray"/>
    <property type="resolution" value="2.95 A"/>
    <property type="chains" value="41/49=1-182"/>
</dbReference>
<dbReference type="PDB" id="4WSM">
    <property type="method" value="X-ray"/>
    <property type="resolution" value="3.30 A"/>
    <property type="chains" value="41/49=1-182"/>
</dbReference>
<dbReference type="PDB" id="4WT1">
    <property type="method" value="X-ray"/>
    <property type="resolution" value="3.05 A"/>
    <property type="chains" value="41/49=1-182"/>
</dbReference>
<dbReference type="PDB" id="4WT8">
    <property type="method" value="X-ray"/>
    <property type="resolution" value="3.40 A"/>
    <property type="chains" value="CE/DE=2-182"/>
</dbReference>
<dbReference type="PDB" id="4WU1">
    <property type="method" value="X-ray"/>
    <property type="resolution" value="3.20 A"/>
    <property type="chains" value="41/49=1-182"/>
</dbReference>
<dbReference type="PDB" id="4WZD">
    <property type="method" value="X-ray"/>
    <property type="resolution" value="3.10 A"/>
    <property type="chains" value="41/49=1-182"/>
</dbReference>
<dbReference type="PDB" id="4WZO">
    <property type="method" value="X-ray"/>
    <property type="resolution" value="3.30 A"/>
    <property type="chains" value="41/49=1-182"/>
</dbReference>
<dbReference type="PDB" id="4Y4O">
    <property type="method" value="X-ray"/>
    <property type="resolution" value="2.30 A"/>
    <property type="chains" value="1G/2G=1-182"/>
</dbReference>
<dbReference type="PDB" id="4Y4P">
    <property type="method" value="X-ray"/>
    <property type="resolution" value="2.50 A"/>
    <property type="chains" value="1G/2G=1-182"/>
</dbReference>
<dbReference type="PDB" id="4YPB">
    <property type="method" value="X-ray"/>
    <property type="resolution" value="3.40 A"/>
    <property type="chains" value="RG/YG=1-182"/>
</dbReference>
<dbReference type="PDB" id="4YZV">
    <property type="method" value="X-ray"/>
    <property type="resolution" value="3.10 A"/>
    <property type="chains" value="RG/YG=1-182"/>
</dbReference>
<dbReference type="PDB" id="4Z3S">
    <property type="method" value="X-ray"/>
    <property type="resolution" value="2.65 A"/>
    <property type="chains" value="1G/2G=1-182"/>
</dbReference>
<dbReference type="PDB" id="4Z8C">
    <property type="method" value="X-ray"/>
    <property type="resolution" value="2.90 A"/>
    <property type="chains" value="1G/2G=1-182"/>
</dbReference>
<dbReference type="PDB" id="4ZER">
    <property type="method" value="X-ray"/>
    <property type="resolution" value="3.10 A"/>
    <property type="chains" value="1G/2G=2-182"/>
</dbReference>
<dbReference type="PDB" id="4ZSN">
    <property type="method" value="X-ray"/>
    <property type="resolution" value="3.60 A"/>
    <property type="chains" value="RG/YG=1-182"/>
</dbReference>
<dbReference type="PDB" id="5A9Z">
    <property type="method" value="EM"/>
    <property type="resolution" value="4.70 A"/>
    <property type="chains" value="AG=1-182"/>
</dbReference>
<dbReference type="PDB" id="5AA0">
    <property type="method" value="EM"/>
    <property type="resolution" value="5.00 A"/>
    <property type="chains" value="AG=1-182"/>
</dbReference>
<dbReference type="PDB" id="5CZP">
    <property type="method" value="X-ray"/>
    <property type="resolution" value="3.30 A"/>
    <property type="chains" value="RG/YG=1-182"/>
</dbReference>
<dbReference type="PDB" id="5D8B">
    <property type="method" value="X-ray"/>
    <property type="resolution" value="3.63 A"/>
    <property type="chains" value="D/ZA=6-182"/>
</dbReference>
<dbReference type="PDB" id="5DFE">
    <property type="method" value="X-ray"/>
    <property type="resolution" value="3.10 A"/>
    <property type="chains" value="RG/YG=1-182"/>
</dbReference>
<dbReference type="PDB" id="5DOX">
    <property type="method" value="X-ray"/>
    <property type="resolution" value="3.10 A"/>
    <property type="chains" value="1G/2G=1-182"/>
</dbReference>
<dbReference type="PDB" id="5DOY">
    <property type="method" value="X-ray"/>
    <property type="resolution" value="2.60 A"/>
    <property type="chains" value="1G/2G=1-182"/>
</dbReference>
<dbReference type="PDB" id="5E7K">
    <property type="method" value="X-ray"/>
    <property type="resolution" value="3.20 A"/>
    <property type="chains" value="41/49=1-182"/>
</dbReference>
<dbReference type="PDB" id="5E81">
    <property type="method" value="X-ray"/>
    <property type="resolution" value="2.95 A"/>
    <property type="chains" value="41/49=1-182"/>
</dbReference>
<dbReference type="PDB" id="5EL4">
    <property type="method" value="X-ray"/>
    <property type="resolution" value="3.15 A"/>
    <property type="chains" value="41/49=1-182"/>
</dbReference>
<dbReference type="PDB" id="5EL5">
    <property type="method" value="X-ray"/>
    <property type="resolution" value="3.15 A"/>
    <property type="chains" value="41/49=1-182"/>
</dbReference>
<dbReference type="PDB" id="5EL6">
    <property type="method" value="X-ray"/>
    <property type="resolution" value="3.10 A"/>
    <property type="chains" value="41/49=1-182"/>
</dbReference>
<dbReference type="PDB" id="5EL7">
    <property type="method" value="X-ray"/>
    <property type="resolution" value="3.15 A"/>
    <property type="chains" value="41/49=1-182"/>
</dbReference>
<dbReference type="PDB" id="5F8K">
    <property type="method" value="X-ray"/>
    <property type="resolution" value="2.80 A"/>
    <property type="chains" value="1G/2G=2-182"/>
</dbReference>
<dbReference type="PDB" id="5FDU">
    <property type="method" value="X-ray"/>
    <property type="resolution" value="2.90 A"/>
    <property type="chains" value="1G/2G=2-182"/>
</dbReference>
<dbReference type="PDB" id="5FDV">
    <property type="method" value="X-ray"/>
    <property type="resolution" value="2.80 A"/>
    <property type="chains" value="1G/2G=2-182"/>
</dbReference>
<dbReference type="PDB" id="5HAU">
    <property type="method" value="X-ray"/>
    <property type="resolution" value="3.00 A"/>
    <property type="chains" value="1G/2G=1-182"/>
</dbReference>
<dbReference type="PDB" id="5HCP">
    <property type="method" value="X-ray"/>
    <property type="resolution" value="2.89 A"/>
    <property type="chains" value="1G/2G=1-182"/>
</dbReference>
<dbReference type="PDB" id="5HCQ">
    <property type="method" value="X-ray"/>
    <property type="resolution" value="2.80 A"/>
    <property type="chains" value="1G/2G=1-182"/>
</dbReference>
<dbReference type="PDB" id="5HCR">
    <property type="method" value="X-ray"/>
    <property type="resolution" value="2.80 A"/>
    <property type="chains" value="1G/2G=1-182"/>
</dbReference>
<dbReference type="PDB" id="5HD1">
    <property type="method" value="X-ray"/>
    <property type="resolution" value="2.70 A"/>
    <property type="chains" value="1G/2G=1-182"/>
</dbReference>
<dbReference type="PDB" id="5IB7">
    <property type="method" value="X-ray"/>
    <property type="resolution" value="2.99 A"/>
    <property type="chains" value="41/49=1-182"/>
</dbReference>
<dbReference type="PDB" id="5IB8">
    <property type="method" value="X-ray"/>
    <property type="resolution" value="3.13 A"/>
    <property type="chains" value="41/49=1-182"/>
</dbReference>
<dbReference type="PDB" id="5IBB">
    <property type="method" value="X-ray"/>
    <property type="resolution" value="2.96 A"/>
    <property type="chains" value="41/49=1-182"/>
</dbReference>
<dbReference type="PDB" id="5IMQ">
    <property type="method" value="EM"/>
    <property type="resolution" value="3.80 A"/>
    <property type="chains" value="d=1-182"/>
</dbReference>
<dbReference type="PDB" id="5IMR">
    <property type="method" value="EM"/>
    <property type="chains" value="d=1-182"/>
</dbReference>
<dbReference type="PDB" id="5J30">
    <property type="method" value="X-ray"/>
    <property type="resolution" value="3.20 A"/>
    <property type="chains" value="RG/YG=1-182"/>
</dbReference>
<dbReference type="PDB" id="5J3C">
    <property type="method" value="X-ray"/>
    <property type="resolution" value="3.04 A"/>
    <property type="chains" value="RG/YG=1-182"/>
</dbReference>
<dbReference type="PDB" id="5J4B">
    <property type="method" value="X-ray"/>
    <property type="resolution" value="2.60 A"/>
    <property type="chains" value="1G/2G=1-182"/>
</dbReference>
<dbReference type="PDB" id="5J4C">
    <property type="method" value="X-ray"/>
    <property type="resolution" value="2.80 A"/>
    <property type="chains" value="1G/2G=1-182"/>
</dbReference>
<dbReference type="PDB" id="5J8B">
    <property type="method" value="X-ray"/>
    <property type="resolution" value="2.60 A"/>
    <property type="chains" value="G=1-182"/>
</dbReference>
<dbReference type="PDB" id="5NDJ">
    <property type="method" value="X-ray"/>
    <property type="resolution" value="3.15 A"/>
    <property type="chains" value="41/49=1-182"/>
</dbReference>
<dbReference type="PDB" id="5NDK">
    <property type="method" value="X-ray"/>
    <property type="resolution" value="2.95 A"/>
    <property type="chains" value="41/49=1-182"/>
</dbReference>
<dbReference type="PDB" id="5OT7">
    <property type="method" value="EM"/>
    <property type="resolution" value="3.80 A"/>
    <property type="chains" value="j=4-182"/>
</dbReference>
<dbReference type="PDB" id="5UQ7">
    <property type="method" value="EM"/>
    <property type="resolution" value="3.50 A"/>
    <property type="chains" value="G=2-182"/>
</dbReference>
<dbReference type="PDB" id="5UQ8">
    <property type="method" value="EM"/>
    <property type="resolution" value="3.20 A"/>
    <property type="chains" value="G=2-182"/>
</dbReference>
<dbReference type="PDB" id="5VP2">
    <property type="method" value="X-ray"/>
    <property type="resolution" value="2.80 A"/>
    <property type="chains" value="1G/2G=1-182"/>
</dbReference>
<dbReference type="PDB" id="5VPO">
    <property type="method" value="X-ray"/>
    <property type="resolution" value="3.34 A"/>
    <property type="chains" value="RG/YG=1-182"/>
</dbReference>
<dbReference type="PDB" id="5VPP">
    <property type="method" value="X-ray"/>
    <property type="resolution" value="3.90 A"/>
    <property type="chains" value="RG/YG=1-182"/>
</dbReference>
<dbReference type="PDB" id="5W4K">
    <property type="method" value="X-ray"/>
    <property type="resolution" value="2.70 A"/>
    <property type="chains" value="1G/2G=1-182"/>
</dbReference>
<dbReference type="PDB" id="5WIS">
    <property type="method" value="X-ray"/>
    <property type="resolution" value="2.70 A"/>
    <property type="chains" value="1G/2G=1-182"/>
</dbReference>
<dbReference type="PDB" id="5WIT">
    <property type="method" value="X-ray"/>
    <property type="resolution" value="2.60 A"/>
    <property type="chains" value="1G/2G=1-182"/>
</dbReference>
<dbReference type="PDB" id="5ZLU">
    <property type="method" value="EM"/>
    <property type="resolution" value="3.60 A"/>
    <property type="chains" value="c=1-182"/>
</dbReference>
<dbReference type="PDB" id="6BUW">
    <property type="method" value="X-ray"/>
    <property type="resolution" value="3.50 A"/>
    <property type="chains" value="RG/YG=1-182"/>
</dbReference>
<dbReference type="PDB" id="6BZ6">
    <property type="method" value="X-ray"/>
    <property type="resolution" value="3.18 A"/>
    <property type="chains" value="RG/YG=1-182"/>
</dbReference>
<dbReference type="PDB" id="6BZ7">
    <property type="method" value="X-ray"/>
    <property type="resolution" value="3.68 A"/>
    <property type="chains" value="RG/YG=1-182"/>
</dbReference>
<dbReference type="PDB" id="6BZ8">
    <property type="method" value="X-ray"/>
    <property type="resolution" value="3.74 A"/>
    <property type="chains" value="RG/YG=1-182"/>
</dbReference>
<dbReference type="PDB" id="6C5L">
    <property type="method" value="X-ray"/>
    <property type="resolution" value="3.20 A"/>
    <property type="chains" value="BG/DG=1-182"/>
</dbReference>
<dbReference type="PDB" id="6CAE">
    <property type="method" value="X-ray"/>
    <property type="resolution" value="2.60 A"/>
    <property type="chains" value="1G/2G=1-182"/>
</dbReference>
<dbReference type="PDB" id="6CFJ">
    <property type="method" value="X-ray"/>
    <property type="resolution" value="2.80 A"/>
    <property type="chains" value="1G/2G=1-182"/>
</dbReference>
<dbReference type="PDB" id="6CFK">
    <property type="method" value="X-ray"/>
    <property type="resolution" value="2.70 A"/>
    <property type="chains" value="1G/2G=1-182"/>
</dbReference>
<dbReference type="PDB" id="6CFL">
    <property type="method" value="X-ray"/>
    <property type="resolution" value="2.60 A"/>
    <property type="chains" value="1G/2G=1-182"/>
</dbReference>
<dbReference type="PDB" id="6CZR">
    <property type="method" value="X-ray"/>
    <property type="resolution" value="3.14 A"/>
    <property type="chains" value="1G/2G=2-182"/>
</dbReference>
<dbReference type="PDB" id="6FKR">
    <property type="method" value="X-ray"/>
    <property type="resolution" value="3.20 A"/>
    <property type="chains" value="1G/2G=2-182"/>
</dbReference>
<dbReference type="PDB" id="6GSJ">
    <property type="method" value="X-ray"/>
    <property type="resolution" value="2.96 A"/>
    <property type="chains" value="41/49=1-182"/>
</dbReference>
<dbReference type="PDB" id="6GSK">
    <property type="method" value="X-ray"/>
    <property type="resolution" value="3.36 A"/>
    <property type="chains" value="41/49=1-182"/>
</dbReference>
<dbReference type="PDB" id="6GSL">
    <property type="method" value="X-ray"/>
    <property type="resolution" value="3.16 A"/>
    <property type="chains" value="41/49=1-182"/>
</dbReference>
<dbReference type="PDB" id="6GZQ">
    <property type="method" value="EM"/>
    <property type="resolution" value="3.28 A"/>
    <property type="chains" value="F1=2-182"/>
</dbReference>
<dbReference type="PDB" id="6GZX">
    <property type="method" value="EM"/>
    <property type="resolution" value="4.57 A"/>
    <property type="chains" value="F1/F2=2-182"/>
</dbReference>
<dbReference type="PDB" id="6GZZ">
    <property type="method" value="EM"/>
    <property type="resolution" value="4.13 A"/>
    <property type="chains" value="F1/F2=2-182"/>
</dbReference>
<dbReference type="PDB" id="6N9E">
    <property type="method" value="X-ray"/>
    <property type="resolution" value="3.70 A"/>
    <property type="chains" value="1G/2G=1-182"/>
</dbReference>
<dbReference type="PDB" id="6N9F">
    <property type="method" value="X-ray"/>
    <property type="resolution" value="3.70 A"/>
    <property type="chains" value="1G/2G=1-182"/>
</dbReference>
<dbReference type="PDB" id="6ND5">
    <property type="method" value="X-ray"/>
    <property type="resolution" value="2.60 A"/>
    <property type="chains" value="1G/2G=1-182"/>
</dbReference>
<dbReference type="PDB" id="6ND6">
    <property type="method" value="X-ray"/>
    <property type="resolution" value="2.85 A"/>
    <property type="chains" value="1G/2G=1-182"/>
</dbReference>
<dbReference type="PDB" id="6NDK">
    <property type="method" value="X-ray"/>
    <property type="resolution" value="3.64 A"/>
    <property type="chains" value="RG/YG=1-182"/>
</dbReference>
<dbReference type="PDB" id="6NSH">
    <property type="method" value="X-ray"/>
    <property type="resolution" value="3.40 A"/>
    <property type="chains" value="RG/YG=1-182"/>
</dbReference>
<dbReference type="PDB" id="6NTA">
    <property type="method" value="X-ray"/>
    <property type="resolution" value="3.10 A"/>
    <property type="chains" value="RG/YG=1-182"/>
</dbReference>
<dbReference type="PDB" id="6NUO">
    <property type="method" value="X-ray"/>
    <property type="resolution" value="3.20 A"/>
    <property type="chains" value="RG/YG=1-182"/>
</dbReference>
<dbReference type="PDB" id="6NWY">
    <property type="method" value="X-ray"/>
    <property type="resolution" value="3.50 A"/>
    <property type="chains" value="RG/YG=1-182"/>
</dbReference>
<dbReference type="PDB" id="6O3M">
    <property type="method" value="X-ray"/>
    <property type="resolution" value="3.97 A"/>
    <property type="chains" value="RG/YG=1-182"/>
</dbReference>
<dbReference type="PDB" id="6O97">
    <property type="method" value="X-ray"/>
    <property type="resolution" value="2.75 A"/>
    <property type="chains" value="1G/2G=1-182"/>
</dbReference>
<dbReference type="PDB" id="6OF1">
    <property type="method" value="X-ray"/>
    <property type="resolution" value="2.80 A"/>
    <property type="chains" value="1G/2G=1-182"/>
</dbReference>
<dbReference type="PDB" id="6OF6">
    <property type="method" value="X-ray"/>
    <property type="resolution" value="3.20 A"/>
    <property type="chains" value="RG/YG=1-182"/>
</dbReference>
<dbReference type="PDB" id="6OJ2">
    <property type="method" value="X-ray"/>
    <property type="resolution" value="3.20 A"/>
    <property type="chains" value="RG/YG=1-182"/>
</dbReference>
<dbReference type="PDB" id="6OPE">
    <property type="method" value="X-ray"/>
    <property type="resolution" value="3.10 A"/>
    <property type="chains" value="RG/YG=1-182"/>
</dbReference>
<dbReference type="PDB" id="6ORD">
    <property type="method" value="X-ray"/>
    <property type="resolution" value="3.10 A"/>
    <property type="chains" value="RG/YG=1-182"/>
</dbReference>
<dbReference type="PDB" id="6OSI">
    <property type="method" value="X-ray"/>
    <property type="resolution" value="4.14 A"/>
    <property type="chains" value="RG/YG=1-182"/>
</dbReference>
<dbReference type="PDB" id="6OTR">
    <property type="method" value="X-ray"/>
    <property type="resolution" value="3.12 A"/>
    <property type="chains" value="RG/YG=1-182"/>
</dbReference>
<dbReference type="PDB" id="6OXA">
    <property type="method" value="X-ray"/>
    <property type="resolution" value="3.25 A"/>
    <property type="chains" value="RG/YG=1-182"/>
</dbReference>
<dbReference type="PDB" id="6OXI">
    <property type="method" value="X-ray"/>
    <property type="resolution" value="3.50 A"/>
    <property type="chains" value="RG/YG=1-182"/>
</dbReference>
<dbReference type="PDB" id="6Q95">
    <property type="method" value="EM"/>
    <property type="resolution" value="3.70 A"/>
    <property type="chains" value="E=2-182"/>
</dbReference>
<dbReference type="PDB" id="6QNQ">
    <property type="method" value="X-ray"/>
    <property type="resolution" value="3.50 A"/>
    <property type="chains" value="41/49=1-182"/>
</dbReference>
<dbReference type="PDB" id="6QNR">
    <property type="method" value="X-ray"/>
    <property type="resolution" value="3.10 A"/>
    <property type="chains" value="41/49=1-182"/>
</dbReference>
<dbReference type="PDB" id="6UCQ">
    <property type="method" value="X-ray"/>
    <property type="resolution" value="3.50 A"/>
    <property type="chains" value="1G/2G=1-182"/>
</dbReference>
<dbReference type="PDB" id="6UO1">
    <property type="method" value="X-ray"/>
    <property type="resolution" value="2.95 A"/>
    <property type="chains" value="1G/2G=1-182"/>
</dbReference>
<dbReference type="PDB" id="6XHV">
    <property type="method" value="X-ray"/>
    <property type="resolution" value="2.40 A"/>
    <property type="chains" value="1G/2G=1-182"/>
</dbReference>
<dbReference type="PDB" id="6XHW">
    <property type="method" value="X-ray"/>
    <property type="resolution" value="2.50 A"/>
    <property type="chains" value="1G/2G=1-182"/>
</dbReference>
<dbReference type="PDB" id="6XHX">
    <property type="method" value="X-ray"/>
    <property type="resolution" value="2.55 A"/>
    <property type="chains" value="1G/2G=1-182"/>
</dbReference>
<dbReference type="PDB" id="6XHY">
    <property type="method" value="X-ray"/>
    <property type="resolution" value="2.60 A"/>
    <property type="chains" value="1G/2G=1-182"/>
</dbReference>
<dbReference type="PDB" id="6XQD">
    <property type="method" value="X-ray"/>
    <property type="resolution" value="2.80 A"/>
    <property type="chains" value="1G/2G=1-182"/>
</dbReference>
<dbReference type="PDB" id="6XQE">
    <property type="method" value="X-ray"/>
    <property type="resolution" value="3.00 A"/>
    <property type="chains" value="1G/2G=1-182"/>
</dbReference>
<dbReference type="PDB" id="7AZO">
    <property type="method" value="X-ray"/>
    <property type="resolution" value="3.30 A"/>
    <property type="chains" value="L5A/L5B=1-182"/>
</dbReference>
<dbReference type="PDB" id="7AZS">
    <property type="method" value="X-ray"/>
    <property type="resolution" value="3.10 A"/>
    <property type="chains" value="L5A/L5B=1-182"/>
</dbReference>
<dbReference type="PDB" id="7JQL">
    <property type="method" value="X-ray"/>
    <property type="resolution" value="3.00 A"/>
    <property type="chains" value="1G/2G=1-182"/>
</dbReference>
<dbReference type="PDB" id="7JQM">
    <property type="method" value="X-ray"/>
    <property type="resolution" value="3.05 A"/>
    <property type="chains" value="1G/2G=1-182"/>
</dbReference>
<dbReference type="PDB" id="7LH5">
    <property type="method" value="X-ray"/>
    <property type="resolution" value="3.27 A"/>
    <property type="chains" value="BG/DG=1-182"/>
</dbReference>
<dbReference type="PDB" id="7MD7">
    <property type="method" value="X-ray"/>
    <property type="resolution" value="2.80 A"/>
    <property type="chains" value="1G/2G=1-182"/>
</dbReference>
<dbReference type="PDB" id="7RQ8">
    <property type="method" value="X-ray"/>
    <property type="resolution" value="2.50 A"/>
    <property type="chains" value="1G/2G=1-182"/>
</dbReference>
<dbReference type="PDB" id="7RQ9">
    <property type="method" value="X-ray"/>
    <property type="resolution" value="2.60 A"/>
    <property type="chains" value="1G/2G=1-182"/>
</dbReference>
<dbReference type="PDB" id="7RQA">
    <property type="method" value="X-ray"/>
    <property type="resolution" value="2.40 A"/>
    <property type="chains" value="1G/2G=1-182"/>
</dbReference>
<dbReference type="PDB" id="7RQB">
    <property type="method" value="X-ray"/>
    <property type="resolution" value="2.45 A"/>
    <property type="chains" value="1G/2G=1-182"/>
</dbReference>
<dbReference type="PDB" id="7RQC">
    <property type="method" value="X-ray"/>
    <property type="resolution" value="2.50 A"/>
    <property type="chains" value="1G/2G=1-182"/>
</dbReference>
<dbReference type="PDB" id="7RQD">
    <property type="method" value="X-ray"/>
    <property type="resolution" value="2.50 A"/>
    <property type="chains" value="1G/2G=1-182"/>
</dbReference>
<dbReference type="PDB" id="7RQE">
    <property type="method" value="X-ray"/>
    <property type="resolution" value="2.40 A"/>
    <property type="chains" value="1G/2G=1-182"/>
</dbReference>
<dbReference type="PDB" id="7U2H">
    <property type="method" value="X-ray"/>
    <property type="resolution" value="2.55 A"/>
    <property type="chains" value="1G/2G=1-182"/>
</dbReference>
<dbReference type="PDB" id="7U2I">
    <property type="method" value="X-ray"/>
    <property type="resolution" value="2.55 A"/>
    <property type="chains" value="1G/2G=1-182"/>
</dbReference>
<dbReference type="PDB" id="7U2J">
    <property type="method" value="X-ray"/>
    <property type="resolution" value="2.55 A"/>
    <property type="chains" value="1G/2G=1-182"/>
</dbReference>
<dbReference type="PDB" id="8CVJ">
    <property type="method" value="X-ray"/>
    <property type="resolution" value="2.40 A"/>
    <property type="chains" value="1G/2G=1-182"/>
</dbReference>
<dbReference type="PDB" id="8CVK">
    <property type="method" value="X-ray"/>
    <property type="resolution" value="2.50 A"/>
    <property type="chains" value="1G/2G=1-182"/>
</dbReference>
<dbReference type="PDB" id="8CVL">
    <property type="method" value="X-ray"/>
    <property type="resolution" value="2.30 A"/>
    <property type="chains" value="1G/2G=1-182"/>
</dbReference>
<dbReference type="PDB" id="8EKB">
    <property type="method" value="X-ray"/>
    <property type="resolution" value="2.70 A"/>
    <property type="chains" value="1G/2G=1-182"/>
</dbReference>
<dbReference type="PDB" id="8EV6">
    <property type="method" value="X-ray"/>
    <property type="resolution" value="2.95 A"/>
    <property type="chains" value="1G/2G=1-182"/>
</dbReference>
<dbReference type="PDB" id="8EV7">
    <property type="method" value="X-ray"/>
    <property type="resolution" value="2.89 A"/>
    <property type="chains" value="1G/2G=1-182"/>
</dbReference>
<dbReference type="PDB" id="8FC1">
    <property type="method" value="X-ray"/>
    <property type="resolution" value="2.50 A"/>
    <property type="chains" value="1G/2G=1-182"/>
</dbReference>
<dbReference type="PDB" id="8FC2">
    <property type="method" value="X-ray"/>
    <property type="resolution" value="2.50 A"/>
    <property type="chains" value="1G/2G=1-182"/>
</dbReference>
<dbReference type="PDB" id="8FC3">
    <property type="method" value="X-ray"/>
    <property type="resolution" value="2.60 A"/>
    <property type="chains" value="1G/2G=1-182"/>
</dbReference>
<dbReference type="PDB" id="8FC4">
    <property type="method" value="X-ray"/>
    <property type="resolution" value="2.45 A"/>
    <property type="chains" value="1G/2G=1-182"/>
</dbReference>
<dbReference type="PDB" id="8FC5">
    <property type="method" value="X-ray"/>
    <property type="resolution" value="2.65 A"/>
    <property type="chains" value="1G/2G=1-182"/>
</dbReference>
<dbReference type="PDB" id="8FC6">
    <property type="method" value="X-ray"/>
    <property type="resolution" value="2.35 A"/>
    <property type="chains" value="1G/2G=1-182"/>
</dbReference>
<dbReference type="PDB" id="8FOM">
    <property type="method" value="X-ray"/>
    <property type="resolution" value="3.58 A"/>
    <property type="chains" value="RG/YG=1-182"/>
</dbReference>
<dbReference type="PDB" id="8FON">
    <property type="method" value="X-ray"/>
    <property type="resolution" value="3.64 A"/>
    <property type="chains" value="RG/YG=1-182"/>
</dbReference>
<dbReference type="PDB" id="8G29">
    <property type="method" value="X-ray"/>
    <property type="resolution" value="2.55 A"/>
    <property type="chains" value="1G/2G=1-182"/>
</dbReference>
<dbReference type="PDB" id="8G2A">
    <property type="method" value="X-ray"/>
    <property type="resolution" value="2.45 A"/>
    <property type="chains" value="1G/2G=1-182"/>
</dbReference>
<dbReference type="PDB" id="8G2B">
    <property type="method" value="X-ray"/>
    <property type="resolution" value="2.55 A"/>
    <property type="chains" value="1G/2G=1-182"/>
</dbReference>
<dbReference type="PDB" id="8G2C">
    <property type="method" value="X-ray"/>
    <property type="resolution" value="2.65 A"/>
    <property type="chains" value="1G/2G=1-182"/>
</dbReference>
<dbReference type="PDB" id="8G2D">
    <property type="method" value="X-ray"/>
    <property type="resolution" value="2.70 A"/>
    <property type="chains" value="1G/2G=1-182"/>
</dbReference>
<dbReference type="PDB" id="8T8B">
    <property type="method" value="X-ray"/>
    <property type="resolution" value="2.65 A"/>
    <property type="chains" value="1G/2G=1-182"/>
</dbReference>
<dbReference type="PDB" id="8T8C">
    <property type="method" value="X-ray"/>
    <property type="resolution" value="2.60 A"/>
    <property type="chains" value="1G/2G=1-182"/>
</dbReference>
<dbReference type="PDB" id="8UD6">
    <property type="method" value="X-ray"/>
    <property type="resolution" value="2.70 A"/>
    <property type="chains" value="1G/2G=1-182"/>
</dbReference>
<dbReference type="PDB" id="8UD7">
    <property type="method" value="X-ray"/>
    <property type="resolution" value="2.55 A"/>
    <property type="chains" value="1G/2G=1-182"/>
</dbReference>
<dbReference type="PDB" id="8UD8">
    <property type="method" value="X-ray"/>
    <property type="resolution" value="2.60 A"/>
    <property type="chains" value="1G/2G=1-182"/>
</dbReference>
<dbReference type="PDB" id="8UVR">
    <property type="method" value="X-ray"/>
    <property type="resolution" value="2.60 A"/>
    <property type="chains" value="1G/2G=1-182"/>
</dbReference>
<dbReference type="PDB" id="8UVS">
    <property type="method" value="X-ray"/>
    <property type="resolution" value="2.75 A"/>
    <property type="chains" value="1G/2G=1-182"/>
</dbReference>
<dbReference type="PDB" id="8VTU">
    <property type="method" value="X-ray"/>
    <property type="resolution" value="2.40 A"/>
    <property type="chains" value="1G/2G=1-182"/>
</dbReference>
<dbReference type="PDB" id="8VTV">
    <property type="method" value="X-ray"/>
    <property type="resolution" value="2.55 A"/>
    <property type="chains" value="1G/2G=1-182"/>
</dbReference>
<dbReference type="PDB" id="8VTW">
    <property type="method" value="X-ray"/>
    <property type="resolution" value="2.35 A"/>
    <property type="chains" value="1G/2G=1-182"/>
</dbReference>
<dbReference type="PDB" id="8VTX">
    <property type="method" value="X-ray"/>
    <property type="resolution" value="2.40 A"/>
    <property type="chains" value="1G/2G=1-182"/>
</dbReference>
<dbReference type="PDB" id="8VTY">
    <property type="method" value="X-ray"/>
    <property type="resolution" value="2.60 A"/>
    <property type="chains" value="1G/2G=1-182"/>
</dbReference>
<dbReference type="PDB" id="8WV1">
    <property type="method" value="X-ray"/>
    <property type="resolution" value="3.99 A"/>
    <property type="chains" value="F/f=1-182"/>
</dbReference>
<dbReference type="PDB" id="9B00">
    <property type="method" value="X-ray"/>
    <property type="resolution" value="2.80 A"/>
    <property type="chains" value="1G/2G=1-182"/>
</dbReference>
<dbReference type="PDB" id="9D0J">
    <property type="method" value="X-ray"/>
    <property type="resolution" value="2.50 A"/>
    <property type="chains" value="1G/2G=1-182"/>
</dbReference>
<dbReference type="PDB" id="9D7R">
    <property type="method" value="X-ray"/>
    <property type="resolution" value="2.70 A"/>
    <property type="chains" value="1G/2G=1-182"/>
</dbReference>
<dbReference type="PDB" id="9D7S">
    <property type="method" value="X-ray"/>
    <property type="resolution" value="2.85 A"/>
    <property type="chains" value="1G/2G=1-182"/>
</dbReference>
<dbReference type="PDB" id="9D7T">
    <property type="method" value="X-ray"/>
    <property type="resolution" value="2.70 A"/>
    <property type="chains" value="1G/2G=1-182"/>
</dbReference>
<dbReference type="PDB" id="9DFC">
    <property type="method" value="X-ray"/>
    <property type="resolution" value="2.50 A"/>
    <property type="chains" value="1G/2G=1-182"/>
</dbReference>
<dbReference type="PDB" id="9DFD">
    <property type="method" value="X-ray"/>
    <property type="resolution" value="2.60 A"/>
    <property type="chains" value="1G/2G=1-182"/>
</dbReference>
<dbReference type="PDB" id="9DFE">
    <property type="method" value="X-ray"/>
    <property type="resolution" value="2.60 A"/>
    <property type="chains" value="1G/2G=1-182"/>
</dbReference>
<dbReference type="PDBsum" id="1VVJ"/>
<dbReference type="PDBsum" id="1VY4"/>
<dbReference type="PDBsum" id="1VY5"/>
<dbReference type="PDBsum" id="1VY6"/>
<dbReference type="PDBsum" id="1VY7"/>
<dbReference type="PDBsum" id="4L47"/>
<dbReference type="PDBsum" id="4L71"/>
<dbReference type="PDBsum" id="4LEL"/>
<dbReference type="PDBsum" id="4LFZ"/>
<dbReference type="PDBsum" id="4LNT"/>
<dbReference type="PDBsum" id="4LSK"/>
<dbReference type="PDBsum" id="4LT8"/>
<dbReference type="PDBsum" id="4P6F"/>
<dbReference type="PDBsum" id="4P70"/>
<dbReference type="PDBsum" id="4TUA"/>
<dbReference type="PDBsum" id="4TUB"/>
<dbReference type="PDBsum" id="4TUC"/>
<dbReference type="PDBsum" id="4TUD"/>
<dbReference type="PDBsum" id="4TUE"/>
<dbReference type="PDBsum" id="4V42"/>
<dbReference type="PDBsum" id="4V4P"/>
<dbReference type="PDBsum" id="4V4X"/>
<dbReference type="PDBsum" id="4V4Y"/>
<dbReference type="PDBsum" id="4V4Z"/>
<dbReference type="PDBsum" id="4V51"/>
<dbReference type="PDBsum" id="4V5A"/>
<dbReference type="PDBsum" id="4V5C"/>
<dbReference type="PDBsum" id="4V5D"/>
<dbReference type="PDBsum" id="4V5E"/>
<dbReference type="PDBsum" id="4V5F"/>
<dbReference type="PDBsum" id="4V5G"/>
<dbReference type="PDBsum" id="4V5J"/>
<dbReference type="PDBsum" id="4V5K"/>
<dbReference type="PDBsum" id="4V5L"/>
<dbReference type="PDBsum" id="4V5M"/>
<dbReference type="PDBsum" id="4V5N"/>
<dbReference type="PDBsum" id="4V5P"/>
<dbReference type="PDBsum" id="4V5Q"/>
<dbReference type="PDBsum" id="4V5R"/>
<dbReference type="PDBsum" id="4V5S"/>
<dbReference type="PDBsum" id="4V68"/>
<dbReference type="PDBsum" id="4V6A"/>
<dbReference type="PDBsum" id="4V6F"/>
<dbReference type="PDBsum" id="4V6G"/>
<dbReference type="PDBsum" id="4V7J"/>
<dbReference type="PDBsum" id="4V7K"/>
<dbReference type="PDBsum" id="4V7L"/>
<dbReference type="PDBsum" id="4V7M"/>
<dbReference type="PDBsum" id="4V7W"/>
<dbReference type="PDBsum" id="4V7X"/>
<dbReference type="PDBsum" id="4V7Y"/>
<dbReference type="PDBsum" id="4V7Z"/>
<dbReference type="PDBsum" id="4V87"/>
<dbReference type="PDBsum" id="4V8A"/>
<dbReference type="PDBsum" id="4V8B"/>
<dbReference type="PDBsum" id="4V8C"/>
<dbReference type="PDBsum" id="4V8D"/>
<dbReference type="PDBsum" id="4V8E"/>
<dbReference type="PDBsum" id="4V8F"/>
<dbReference type="PDBsum" id="4V8G"/>
<dbReference type="PDBsum" id="4V8H"/>
<dbReference type="PDBsum" id="4V8I"/>
<dbReference type="PDBsum" id="4V8J"/>
<dbReference type="PDBsum" id="4V8N"/>
<dbReference type="PDBsum" id="4V8O"/>
<dbReference type="PDBsum" id="4V8Q"/>
<dbReference type="PDBsum" id="4V8U"/>
<dbReference type="PDBsum" id="4V8X"/>
<dbReference type="PDBsum" id="4V90"/>
<dbReference type="PDBsum" id="4V95"/>
<dbReference type="PDBsum" id="4V97"/>
<dbReference type="PDBsum" id="4V9A"/>
<dbReference type="PDBsum" id="4V9B"/>
<dbReference type="PDBsum" id="4V9H"/>
<dbReference type="PDBsum" id="4V9I"/>
<dbReference type="PDBsum" id="4V9R"/>
<dbReference type="PDBsum" id="4V9S"/>
<dbReference type="PDBsum" id="4W2E"/>
<dbReference type="PDBsum" id="4W2F"/>
<dbReference type="PDBsum" id="4W2G"/>
<dbReference type="PDBsum" id="4W2H"/>
<dbReference type="PDBsum" id="4W2I"/>
<dbReference type="PDBsum" id="4W4G"/>
<dbReference type="PDBsum" id="4WPO"/>
<dbReference type="PDBsum" id="4WQ1"/>
<dbReference type="PDBsum" id="4WQF"/>
<dbReference type="PDBsum" id="4WQR"/>
<dbReference type="PDBsum" id="4WQU"/>
<dbReference type="PDBsum" id="4WQY"/>
<dbReference type="PDBsum" id="4WR6"/>
<dbReference type="PDBsum" id="4WRA"/>
<dbReference type="PDBsum" id="4WRO"/>
<dbReference type="PDBsum" id="4WSD"/>
<dbReference type="PDBsum" id="4WSM"/>
<dbReference type="PDBsum" id="4WT1"/>
<dbReference type="PDBsum" id="4WT8"/>
<dbReference type="PDBsum" id="4WU1"/>
<dbReference type="PDBsum" id="4WZD"/>
<dbReference type="PDBsum" id="4WZO"/>
<dbReference type="PDBsum" id="4Y4O"/>
<dbReference type="PDBsum" id="4Y4P"/>
<dbReference type="PDBsum" id="4YPB"/>
<dbReference type="PDBsum" id="4YZV"/>
<dbReference type="PDBsum" id="4Z3S"/>
<dbReference type="PDBsum" id="4Z8C"/>
<dbReference type="PDBsum" id="4ZER"/>
<dbReference type="PDBsum" id="4ZSN"/>
<dbReference type="PDBsum" id="5A9Z"/>
<dbReference type="PDBsum" id="5AA0"/>
<dbReference type="PDBsum" id="5CZP"/>
<dbReference type="PDBsum" id="5D8B"/>
<dbReference type="PDBsum" id="5DFE"/>
<dbReference type="PDBsum" id="5DOX"/>
<dbReference type="PDBsum" id="5DOY"/>
<dbReference type="PDBsum" id="5E7K"/>
<dbReference type="PDBsum" id="5E81"/>
<dbReference type="PDBsum" id="5EL4"/>
<dbReference type="PDBsum" id="5EL5"/>
<dbReference type="PDBsum" id="5EL6"/>
<dbReference type="PDBsum" id="5EL7"/>
<dbReference type="PDBsum" id="5F8K"/>
<dbReference type="PDBsum" id="5FDU"/>
<dbReference type="PDBsum" id="5FDV"/>
<dbReference type="PDBsum" id="5HAU"/>
<dbReference type="PDBsum" id="5HCP"/>
<dbReference type="PDBsum" id="5HCQ"/>
<dbReference type="PDBsum" id="5HCR"/>
<dbReference type="PDBsum" id="5HD1"/>
<dbReference type="PDBsum" id="5IB7"/>
<dbReference type="PDBsum" id="5IB8"/>
<dbReference type="PDBsum" id="5IBB"/>
<dbReference type="PDBsum" id="5IMQ"/>
<dbReference type="PDBsum" id="5IMR"/>
<dbReference type="PDBsum" id="5J30"/>
<dbReference type="PDBsum" id="5J3C"/>
<dbReference type="PDBsum" id="5J4B"/>
<dbReference type="PDBsum" id="5J4C"/>
<dbReference type="PDBsum" id="5J8B"/>
<dbReference type="PDBsum" id="5NDJ"/>
<dbReference type="PDBsum" id="5NDK"/>
<dbReference type="PDBsum" id="5OT7"/>
<dbReference type="PDBsum" id="5UQ7"/>
<dbReference type="PDBsum" id="5UQ8"/>
<dbReference type="PDBsum" id="5VP2"/>
<dbReference type="PDBsum" id="5VPO"/>
<dbReference type="PDBsum" id="5VPP"/>
<dbReference type="PDBsum" id="5W4K"/>
<dbReference type="PDBsum" id="5WIS"/>
<dbReference type="PDBsum" id="5WIT"/>
<dbReference type="PDBsum" id="5ZLU"/>
<dbReference type="PDBsum" id="6BUW"/>
<dbReference type="PDBsum" id="6BZ6"/>
<dbReference type="PDBsum" id="6BZ7"/>
<dbReference type="PDBsum" id="6BZ8"/>
<dbReference type="PDBsum" id="6C5L"/>
<dbReference type="PDBsum" id="6CAE"/>
<dbReference type="PDBsum" id="6CFJ"/>
<dbReference type="PDBsum" id="6CFK"/>
<dbReference type="PDBsum" id="6CFL"/>
<dbReference type="PDBsum" id="6CZR"/>
<dbReference type="PDBsum" id="6FKR"/>
<dbReference type="PDBsum" id="6GSJ"/>
<dbReference type="PDBsum" id="6GSK"/>
<dbReference type="PDBsum" id="6GSL"/>
<dbReference type="PDBsum" id="6GZQ"/>
<dbReference type="PDBsum" id="6GZX"/>
<dbReference type="PDBsum" id="6GZZ"/>
<dbReference type="PDBsum" id="6N9E"/>
<dbReference type="PDBsum" id="6N9F"/>
<dbReference type="PDBsum" id="6ND5"/>
<dbReference type="PDBsum" id="6ND6"/>
<dbReference type="PDBsum" id="6NDK"/>
<dbReference type="PDBsum" id="6NSH"/>
<dbReference type="PDBsum" id="6NTA"/>
<dbReference type="PDBsum" id="6NUO"/>
<dbReference type="PDBsum" id="6NWY"/>
<dbReference type="PDBsum" id="6O3M"/>
<dbReference type="PDBsum" id="6O97"/>
<dbReference type="PDBsum" id="6OF1"/>
<dbReference type="PDBsum" id="6OF6"/>
<dbReference type="PDBsum" id="6OJ2"/>
<dbReference type="PDBsum" id="6OPE"/>
<dbReference type="PDBsum" id="6ORD"/>
<dbReference type="PDBsum" id="6OSI"/>
<dbReference type="PDBsum" id="6OTR"/>
<dbReference type="PDBsum" id="6OXA"/>
<dbReference type="PDBsum" id="6OXI"/>
<dbReference type="PDBsum" id="6Q95"/>
<dbReference type="PDBsum" id="6QNQ"/>
<dbReference type="PDBsum" id="6QNR"/>
<dbReference type="PDBsum" id="6UCQ"/>
<dbReference type="PDBsum" id="6UO1"/>
<dbReference type="PDBsum" id="6XHV"/>
<dbReference type="PDBsum" id="6XHW"/>
<dbReference type="PDBsum" id="6XHX"/>
<dbReference type="PDBsum" id="6XHY"/>
<dbReference type="PDBsum" id="6XQD"/>
<dbReference type="PDBsum" id="6XQE"/>
<dbReference type="PDBsum" id="7AZO"/>
<dbReference type="PDBsum" id="7AZS"/>
<dbReference type="PDBsum" id="7JQL"/>
<dbReference type="PDBsum" id="7JQM"/>
<dbReference type="PDBsum" id="7LH5"/>
<dbReference type="PDBsum" id="7MD7"/>
<dbReference type="PDBsum" id="7RQ8"/>
<dbReference type="PDBsum" id="7RQ9"/>
<dbReference type="PDBsum" id="7RQA"/>
<dbReference type="PDBsum" id="7RQB"/>
<dbReference type="PDBsum" id="7RQC"/>
<dbReference type="PDBsum" id="7RQD"/>
<dbReference type="PDBsum" id="7RQE"/>
<dbReference type="PDBsum" id="7U2H"/>
<dbReference type="PDBsum" id="7U2I"/>
<dbReference type="PDBsum" id="7U2J"/>
<dbReference type="PDBsum" id="8CVJ"/>
<dbReference type="PDBsum" id="8CVK"/>
<dbReference type="PDBsum" id="8CVL"/>
<dbReference type="PDBsum" id="8EKB"/>
<dbReference type="PDBsum" id="8EV6"/>
<dbReference type="PDBsum" id="8EV7"/>
<dbReference type="PDBsum" id="8FC1"/>
<dbReference type="PDBsum" id="8FC2"/>
<dbReference type="PDBsum" id="8FC3"/>
<dbReference type="PDBsum" id="8FC4"/>
<dbReference type="PDBsum" id="8FC5"/>
<dbReference type="PDBsum" id="8FC6"/>
<dbReference type="PDBsum" id="8FOM"/>
<dbReference type="PDBsum" id="8FON"/>
<dbReference type="PDBsum" id="8G29"/>
<dbReference type="PDBsum" id="8G2A"/>
<dbReference type="PDBsum" id="8G2B"/>
<dbReference type="PDBsum" id="8G2C"/>
<dbReference type="PDBsum" id="8G2D"/>
<dbReference type="PDBsum" id="8T8B"/>
<dbReference type="PDBsum" id="8T8C"/>
<dbReference type="PDBsum" id="8UD6"/>
<dbReference type="PDBsum" id="8UD7"/>
<dbReference type="PDBsum" id="8UD8"/>
<dbReference type="PDBsum" id="8UVR"/>
<dbReference type="PDBsum" id="8UVS"/>
<dbReference type="PDBsum" id="8VTU"/>
<dbReference type="PDBsum" id="8VTV"/>
<dbReference type="PDBsum" id="8VTW"/>
<dbReference type="PDBsum" id="8VTX"/>
<dbReference type="PDBsum" id="8VTY"/>
<dbReference type="PDBsum" id="8WV1"/>
<dbReference type="PDBsum" id="9B00"/>
<dbReference type="PDBsum" id="9D0J"/>
<dbReference type="PDBsum" id="9D7R"/>
<dbReference type="PDBsum" id="9D7S"/>
<dbReference type="PDBsum" id="9D7T"/>
<dbReference type="PDBsum" id="9DFC"/>
<dbReference type="PDBsum" id="9DFD"/>
<dbReference type="PDBsum" id="9DFE"/>
<dbReference type="EMDB" id="EMD-0101"/>
<dbReference type="EMDB" id="EMD-0104"/>
<dbReference type="EMDB" id="EMD-0105"/>
<dbReference type="EMDB" id="EMD-3852"/>
<dbReference type="EMDB" id="EMD-4475"/>
<dbReference type="EMDB" id="EMD-6934"/>
<dbReference type="EMDB" id="EMD-8596"/>
<dbReference type="EMDB" id="EMD-8597"/>
<dbReference type="SMR" id="Q5SHQ0"/>
<dbReference type="IntAct" id="Q5SHQ0">
    <property type="interactions" value="8"/>
</dbReference>
<dbReference type="EnsemblBacteria" id="BAD71503">
    <property type="protein sequence ID" value="BAD71503"/>
    <property type="gene ID" value="BAD71503"/>
</dbReference>
<dbReference type="GeneID" id="3169803"/>
<dbReference type="KEGG" id="ttj:TTHA1680"/>
<dbReference type="PATRIC" id="fig|300852.9.peg.1650"/>
<dbReference type="eggNOG" id="COG0094">
    <property type="taxonomic scope" value="Bacteria"/>
</dbReference>
<dbReference type="HOGENOM" id="CLU_061015_2_1_0"/>
<dbReference type="PhylomeDB" id="Q5SHQ0"/>
<dbReference type="Proteomes" id="UP000000532">
    <property type="component" value="Chromosome"/>
</dbReference>
<dbReference type="GO" id="GO:1990904">
    <property type="term" value="C:ribonucleoprotein complex"/>
    <property type="evidence" value="ECO:0007669"/>
    <property type="project" value="UniProtKB-KW"/>
</dbReference>
<dbReference type="GO" id="GO:0005840">
    <property type="term" value="C:ribosome"/>
    <property type="evidence" value="ECO:0007669"/>
    <property type="project" value="UniProtKB-KW"/>
</dbReference>
<dbReference type="GO" id="GO:0019843">
    <property type="term" value="F:rRNA binding"/>
    <property type="evidence" value="ECO:0007669"/>
    <property type="project" value="UniProtKB-UniRule"/>
</dbReference>
<dbReference type="GO" id="GO:0003735">
    <property type="term" value="F:structural constituent of ribosome"/>
    <property type="evidence" value="ECO:0007669"/>
    <property type="project" value="InterPro"/>
</dbReference>
<dbReference type="GO" id="GO:0000049">
    <property type="term" value="F:tRNA binding"/>
    <property type="evidence" value="ECO:0007669"/>
    <property type="project" value="UniProtKB-UniRule"/>
</dbReference>
<dbReference type="GO" id="GO:0006412">
    <property type="term" value="P:translation"/>
    <property type="evidence" value="ECO:0007669"/>
    <property type="project" value="UniProtKB-UniRule"/>
</dbReference>
<dbReference type="FunFam" id="3.30.1440.10:FF:000001">
    <property type="entry name" value="50S ribosomal protein L5"/>
    <property type="match status" value="1"/>
</dbReference>
<dbReference type="Gene3D" id="3.30.1440.10">
    <property type="match status" value="1"/>
</dbReference>
<dbReference type="HAMAP" id="MF_01333_B">
    <property type="entry name" value="Ribosomal_uL5_B"/>
    <property type="match status" value="1"/>
</dbReference>
<dbReference type="InterPro" id="IPR002132">
    <property type="entry name" value="Ribosomal_uL5"/>
</dbReference>
<dbReference type="InterPro" id="IPR020930">
    <property type="entry name" value="Ribosomal_uL5_bac-type"/>
</dbReference>
<dbReference type="InterPro" id="IPR031309">
    <property type="entry name" value="Ribosomal_uL5_C"/>
</dbReference>
<dbReference type="InterPro" id="IPR020929">
    <property type="entry name" value="Ribosomal_uL5_CS"/>
</dbReference>
<dbReference type="InterPro" id="IPR022803">
    <property type="entry name" value="Ribosomal_uL5_dom_sf"/>
</dbReference>
<dbReference type="InterPro" id="IPR031310">
    <property type="entry name" value="Ribosomal_uL5_N"/>
</dbReference>
<dbReference type="NCBIfam" id="NF000585">
    <property type="entry name" value="PRK00010.1"/>
    <property type="match status" value="1"/>
</dbReference>
<dbReference type="PANTHER" id="PTHR11994">
    <property type="entry name" value="60S RIBOSOMAL PROTEIN L11-RELATED"/>
    <property type="match status" value="1"/>
</dbReference>
<dbReference type="Pfam" id="PF00281">
    <property type="entry name" value="Ribosomal_L5"/>
    <property type="match status" value="1"/>
</dbReference>
<dbReference type="Pfam" id="PF00673">
    <property type="entry name" value="Ribosomal_L5_C"/>
    <property type="match status" value="1"/>
</dbReference>
<dbReference type="PIRSF" id="PIRSF002161">
    <property type="entry name" value="Ribosomal_L5"/>
    <property type="match status" value="1"/>
</dbReference>
<dbReference type="SUPFAM" id="SSF55282">
    <property type="entry name" value="RL5-like"/>
    <property type="match status" value="1"/>
</dbReference>
<dbReference type="PROSITE" id="PS00358">
    <property type="entry name" value="RIBOSOMAL_L5"/>
    <property type="match status" value="1"/>
</dbReference>
<gene>
    <name type="primary">rplE</name>
    <name type="ordered locus">TTHA1680</name>
</gene>
<reference key="1">
    <citation type="journal article" date="1991" name="Biochimie">
        <title>Comparative analysis of ribosomal protein L5 sequences from bacteria of the genus Thermus.</title>
        <authorList>
            <person name="Jahn O."/>
            <person name="Hartmann R.K."/>
            <person name="Boeckh T."/>
            <person name="Erdmann V.A."/>
        </authorList>
    </citation>
    <scope>NUCLEOTIDE SEQUENCE [GENOMIC DNA]</scope>
</reference>
<reference key="2">
    <citation type="submission" date="2004-11" db="EMBL/GenBank/DDBJ databases">
        <title>Complete genome sequence of Thermus thermophilus HB8.</title>
        <authorList>
            <person name="Masui R."/>
            <person name="Kurokawa K."/>
            <person name="Nakagawa N."/>
            <person name="Tokunaga F."/>
            <person name="Koyama Y."/>
            <person name="Shibata T."/>
            <person name="Oshima T."/>
            <person name="Yokoyama S."/>
            <person name="Yasunaga T."/>
            <person name="Kuramitsu S."/>
        </authorList>
    </citation>
    <scope>NUCLEOTIDE SEQUENCE [LARGE SCALE GENOMIC DNA]</scope>
    <source>
        <strain>ATCC 27634 / DSM 579 / HB8</strain>
    </source>
</reference>
<reference key="3">
    <citation type="journal article" date="1996" name="Endocyt. Cell Res.">
        <title>Identification, purification and partial sequence of four Thermus thermophilus 5S rRNA binding proteins.</title>
        <authorList>
            <person name="Kim J.-S."/>
            <person name="Boysen R.I."/>
            <person name="Schroeder W."/>
            <person name="Erdmann V.A."/>
            <person name="Gessner R.V."/>
        </authorList>
    </citation>
    <scope>PROTEIN SEQUENCE OF 2-44</scope>
    <scope>ISOLATION OF 5S RRNA-ASSOCIATED COMPLEXES</scope>
</reference>
<reference key="4">
    <citation type="journal article" date="1995" name="Endocyt. Cell Res.">
        <title>The isolation and complete amino acid sequence of the ribosomal protein L36 from Thermus thermophilus and its zinc-binding motif.</title>
        <authorList>
            <person name="Boysen R.I."/>
            <person name="Lorenz S."/>
            <person name="Kim J.S."/>
            <person name="Schroeder W.F.K.J."/>
            <person name="Erdmann V.A."/>
        </authorList>
    </citation>
    <scope>PROTEIN SEQUENCE OF 2-41</scope>
</reference>
<reference key="5">
    <citation type="journal article" date="2000" name="Biol. Chem.">
        <title>Identification of the 50S ribosomal proteins from the eubacterium Thermus thermophilus.</title>
        <authorList>
            <person name="Katsani K.R."/>
            <person name="Tsiboli P."/>
            <person name="Anagnostopoulos K."/>
            <person name="Urlaub H."/>
            <person name="Choli-Papadopoulou T."/>
        </authorList>
    </citation>
    <scope>PROTEIN SEQUENCE OF 2-28</scope>
    <source>
        <strain>ATCC 27634 / DSM 579 / HB8</strain>
    </source>
</reference>
<reference key="6">
    <citation type="journal article" date="2005" name="Proteomics">
        <title>Extending ribosomal protein identifications to unsequenced bacterial strains using matrix-assisted laser desorption/ionization mass spectrometry.</title>
        <authorList>
            <person name="Suh M.-J."/>
            <person name="Hamburg D.M."/>
            <person name="Gregory S.T."/>
            <person name="Dahlberg A.E."/>
            <person name="Limbach P.A."/>
        </authorList>
    </citation>
    <scope>MASS SPECTROMETRY</scope>
    <source>
        <strain>ATCC 27634 / DSM 579 / HB8</strain>
    </source>
</reference>
<reference key="7">
    <citation type="journal article" date="2001" name="Cell">
        <title>The path of messenger RNA through the ribosome.</title>
        <authorList>
            <person name="Yusupova G.Z."/>
            <person name="Yusupov M.M."/>
            <person name="Cate J.H.D."/>
            <person name="Noller H.F."/>
        </authorList>
    </citation>
    <scope>X-RAY CRYSTALLOGRAPHY (5.0 ANGSTROMS) OF THE RIBOSOME</scope>
</reference>
<reference key="8">
    <citation type="journal article" date="2001" name="Science">
        <title>Crystal structure of the ribosome at 5.5 A resolution.</title>
        <authorList>
            <person name="Yusupov M.M."/>
            <person name="Yusupova G.Z."/>
            <person name="Baucom A."/>
            <person name="Lieberman K."/>
            <person name="Earnest T.N."/>
            <person name="Cate J.H.D."/>
            <person name="Noller H.F."/>
        </authorList>
    </citation>
    <scope>X-RAY CRYSTALLOGRAPHY (5.5 ANGSTROMS) OF THE RIBOSOME</scope>
    <scope>INTERSUBUNIT BRIDGE FORMATION</scope>
</reference>
<reference key="9">
    <citation type="journal article" date="2008" name="Science">
        <title>Insights into translational termination from the structure of RF2 bound to the ribosome.</title>
        <authorList>
            <person name="Weixlbaumer A."/>
            <person name="Jin H."/>
            <person name="Neubauer C."/>
            <person name="Voorhees R.M."/>
            <person name="Petry S."/>
            <person name="Kelley A.C."/>
            <person name="Ramakrishnan V."/>
        </authorList>
    </citation>
    <scope>X-RAY CRYSTALLOGRAPHY (3.45 ANGSTROMS) OF 70S RIBOSOME IN COMPLEX WITH RF2</scope>
    <scope>SUBUNIT</scope>
</reference>
<reference key="10">
    <citation type="journal article" date="2010" name="Proc. Natl. Acad. Sci. U.S.A.">
        <title>Structure of the 70S ribosome bound to release factor 2 and a substrate analog provides insights into catalysis of peptide release.</title>
        <authorList>
            <person name="Jin H."/>
            <person name="Kelley A.C."/>
            <person name="Loakes D."/>
            <person name="Ramakrishnan V."/>
        </authorList>
    </citation>
    <scope>X-RAY CRYSTALLOGRAPHY (3.10 ANGSTROMS) OF 70S RIBOSOME IN COMPLEX WITH RF2</scope>
    <scope>SUBUNIT</scope>
</reference>
<evidence type="ECO:0000269" key="1">
    <source>
    </source>
</evidence>
<evidence type="ECO:0000269" key="2">
    <source>
    </source>
</evidence>
<evidence type="ECO:0000269" key="3">
    <source ref="3"/>
</evidence>
<evidence type="ECO:0000269" key="4">
    <source ref="4"/>
</evidence>
<evidence type="ECO:0000303" key="5">
    <source ref="3"/>
</evidence>
<evidence type="ECO:0000305" key="6"/>
<evidence type="ECO:0007829" key="7">
    <source>
        <dbReference type="PDB" id="4WT8"/>
    </source>
</evidence>